<gene>
    <name type="primary">CPN20</name>
    <name type="synonym">CHCPN10</name>
    <name type="synonym">CPN21</name>
    <name type="ordered locus">At5g20720</name>
    <name type="ORF">T1M15.120</name>
</gene>
<comment type="function">
    <text evidence="3 4">Seems to function only as a co-chaperone, along with CPN60, and in certain cases is essential for the discharge of biologically active proteins from CPN60 (PubMed:17178727, PubMed:23057508). Required to activate the iron superoxide dismutases (FeSOD) (PubMed:23057508).</text>
</comment>
<comment type="function">
    <text evidence="5">Involved in abscisic acid (ABA) signaling, independently of its co-chaperone role. Acts as a negative regulator of the CHLH-WRKY40 coupled ABA signaling pathway, downstream of CHLH and upstream of WRKY40.</text>
</comment>
<comment type="subunit">
    <text evidence="2 4 5 6 7">Homotetramer. Forms stable complexes with CPN60 in the presence of ATP (PubMed:10205903). Interacts with FSD1 (PubMed:23057508). Interacts with CLPT1 and CLPT2 (PubMed:25921872). Interacts with CHLH (PubMed:10205903, PubMed:23057508, PubMed:23783410, PubMed:25921872). Interacts with SPY (PubMed:34712252).</text>
</comment>
<comment type="subcellular location">
    <subcellularLocation>
        <location evidence="2">Plastid</location>
        <location evidence="2">Chloroplast</location>
    </subcellularLocation>
</comment>
<comment type="tissue specificity">
    <text evidence="2">Ubiquitous. Most abundant in leaves and inflorescence. Low levels found in roots.</text>
</comment>
<comment type="induction">
    <text evidence="2">Induced by heat treatment.</text>
</comment>
<comment type="similarity">
    <text evidence="8">Belongs to the GroES chaperonin family.</text>
</comment>
<dbReference type="EMBL" id="AJ010818">
    <property type="protein sequence ID" value="CAA09368.1"/>
    <property type="molecule type" value="mRNA"/>
</dbReference>
<dbReference type="EMBL" id="AF268068">
    <property type="protein sequence ID" value="AAG13931.1"/>
    <property type="molecule type" value="mRNA"/>
</dbReference>
<dbReference type="EMBL" id="AF059037">
    <property type="protein sequence ID" value="AAC14026.1"/>
    <property type="molecule type" value="mRNA"/>
</dbReference>
<dbReference type="EMBL" id="AB007130">
    <property type="protein sequence ID" value="BAB61619.1"/>
    <property type="molecule type" value="mRNA"/>
</dbReference>
<dbReference type="EMBL" id="AF296832">
    <property type="status" value="NOT_ANNOTATED_CDS"/>
    <property type="molecule type" value="Genomic_DNA"/>
</dbReference>
<dbReference type="EMBL" id="CP002688">
    <property type="protein sequence ID" value="AED92881.1"/>
    <property type="molecule type" value="Genomic_DNA"/>
</dbReference>
<dbReference type="EMBL" id="CP002688">
    <property type="protein sequence ID" value="AED92882.1"/>
    <property type="molecule type" value="Genomic_DNA"/>
</dbReference>
<dbReference type="EMBL" id="CP002688">
    <property type="protein sequence ID" value="AED92883.1"/>
    <property type="molecule type" value="Genomic_DNA"/>
</dbReference>
<dbReference type="EMBL" id="CP002688">
    <property type="protein sequence ID" value="ANM70274.1"/>
    <property type="molecule type" value="Genomic_DNA"/>
</dbReference>
<dbReference type="EMBL" id="AY062971">
    <property type="protein sequence ID" value="AAL33817.1"/>
    <property type="molecule type" value="mRNA"/>
</dbReference>
<dbReference type="EMBL" id="AY034979">
    <property type="protein sequence ID" value="AAK59484.1"/>
    <property type="molecule type" value="mRNA"/>
</dbReference>
<dbReference type="EMBL" id="AF428366">
    <property type="protein sequence ID" value="AAL16296.1"/>
    <property type="molecule type" value="mRNA"/>
</dbReference>
<dbReference type="EMBL" id="AF428339">
    <property type="protein sequence ID" value="AAL16269.1"/>
    <property type="molecule type" value="mRNA"/>
</dbReference>
<dbReference type="PIR" id="T52122">
    <property type="entry name" value="T52122"/>
</dbReference>
<dbReference type="PIR" id="T52613">
    <property type="entry name" value="T52613"/>
</dbReference>
<dbReference type="RefSeq" id="NP_001318614.1">
    <property type="nucleotide sequence ID" value="NM_001343684.1"/>
</dbReference>
<dbReference type="RefSeq" id="NP_001331898.1">
    <property type="nucleotide sequence ID" value="NM_001343685.1"/>
</dbReference>
<dbReference type="RefSeq" id="NP_197572.1">
    <property type="nucleotide sequence ID" value="NM_122079.4"/>
</dbReference>
<dbReference type="RefSeq" id="NP_851045.1">
    <property type="nucleotide sequence ID" value="NM_180714.4"/>
</dbReference>
<dbReference type="SMR" id="O65282"/>
<dbReference type="BioGRID" id="17470">
    <property type="interactions" value="21"/>
</dbReference>
<dbReference type="FunCoup" id="O65282">
    <property type="interactions" value="1320"/>
</dbReference>
<dbReference type="IntAct" id="O65282">
    <property type="interactions" value="5"/>
</dbReference>
<dbReference type="STRING" id="3702.O65282"/>
<dbReference type="iPTMnet" id="O65282"/>
<dbReference type="PaxDb" id="3702-AT5G20720.3"/>
<dbReference type="ProteomicsDB" id="224486"/>
<dbReference type="EnsemblPlants" id="AT5G20720.1">
    <property type="protein sequence ID" value="AT5G20720.1"/>
    <property type="gene ID" value="AT5G20720"/>
</dbReference>
<dbReference type="EnsemblPlants" id="AT5G20720.2">
    <property type="protein sequence ID" value="AT5G20720.2"/>
    <property type="gene ID" value="AT5G20720"/>
</dbReference>
<dbReference type="EnsemblPlants" id="AT5G20720.3">
    <property type="protein sequence ID" value="AT5G20720.3"/>
    <property type="gene ID" value="AT5G20720"/>
</dbReference>
<dbReference type="EnsemblPlants" id="AT5G20720.4">
    <property type="protein sequence ID" value="AT5G20720.4"/>
    <property type="gene ID" value="AT5G20720"/>
</dbReference>
<dbReference type="GeneID" id="832195"/>
<dbReference type="Gramene" id="AT5G20720.1">
    <property type="protein sequence ID" value="AT5G20720.1"/>
    <property type="gene ID" value="AT5G20720"/>
</dbReference>
<dbReference type="Gramene" id="AT5G20720.2">
    <property type="protein sequence ID" value="AT5G20720.2"/>
    <property type="gene ID" value="AT5G20720"/>
</dbReference>
<dbReference type="Gramene" id="AT5G20720.3">
    <property type="protein sequence ID" value="AT5G20720.3"/>
    <property type="gene ID" value="AT5G20720"/>
</dbReference>
<dbReference type="Gramene" id="AT5G20720.4">
    <property type="protein sequence ID" value="AT5G20720.4"/>
    <property type="gene ID" value="AT5G20720"/>
</dbReference>
<dbReference type="KEGG" id="ath:AT5G20720"/>
<dbReference type="Araport" id="AT5G20720"/>
<dbReference type="TAIR" id="AT5G20720">
    <property type="gene designation" value="CPN20"/>
</dbReference>
<dbReference type="eggNOG" id="KOG1641">
    <property type="taxonomic scope" value="Eukaryota"/>
</dbReference>
<dbReference type="HOGENOM" id="CLU_073980_0_0_1"/>
<dbReference type="InParanoid" id="O65282"/>
<dbReference type="OMA" id="DIRVNDY"/>
<dbReference type="OrthoDB" id="184876at2759"/>
<dbReference type="PhylomeDB" id="O65282"/>
<dbReference type="CD-CODE" id="4299E36E">
    <property type="entry name" value="Nucleolus"/>
</dbReference>
<dbReference type="PRO" id="PR:O65282"/>
<dbReference type="Proteomes" id="UP000006548">
    <property type="component" value="Chromosome 5"/>
</dbReference>
<dbReference type="ExpressionAtlas" id="O65282">
    <property type="expression patterns" value="baseline and differential"/>
</dbReference>
<dbReference type="GO" id="GO:0048046">
    <property type="term" value="C:apoplast"/>
    <property type="evidence" value="ECO:0007005"/>
    <property type="project" value="TAIR"/>
</dbReference>
<dbReference type="GO" id="GO:0009507">
    <property type="term" value="C:chloroplast"/>
    <property type="evidence" value="ECO:0000314"/>
    <property type="project" value="TAIR"/>
</dbReference>
<dbReference type="GO" id="GO:0009941">
    <property type="term" value="C:chloroplast envelope"/>
    <property type="evidence" value="ECO:0007005"/>
    <property type="project" value="TAIR"/>
</dbReference>
<dbReference type="GO" id="GO:0009570">
    <property type="term" value="C:chloroplast stroma"/>
    <property type="evidence" value="ECO:0007005"/>
    <property type="project" value="TAIR"/>
</dbReference>
<dbReference type="GO" id="GO:0009535">
    <property type="term" value="C:chloroplast thylakoid membrane"/>
    <property type="evidence" value="ECO:0007005"/>
    <property type="project" value="TAIR"/>
</dbReference>
<dbReference type="GO" id="GO:0005739">
    <property type="term" value="C:mitochondrion"/>
    <property type="evidence" value="ECO:0007005"/>
    <property type="project" value="TAIR"/>
</dbReference>
<dbReference type="GO" id="GO:0009536">
    <property type="term" value="C:plastid"/>
    <property type="evidence" value="ECO:0007005"/>
    <property type="project" value="TAIR"/>
</dbReference>
<dbReference type="GO" id="GO:0009579">
    <property type="term" value="C:thylakoid"/>
    <property type="evidence" value="ECO:0007005"/>
    <property type="project" value="TAIR"/>
</dbReference>
<dbReference type="GO" id="GO:0005524">
    <property type="term" value="F:ATP binding"/>
    <property type="evidence" value="ECO:0007669"/>
    <property type="project" value="InterPro"/>
</dbReference>
<dbReference type="GO" id="GO:0005507">
    <property type="term" value="F:copper ion binding"/>
    <property type="evidence" value="ECO:0007005"/>
    <property type="project" value="TAIR"/>
</dbReference>
<dbReference type="GO" id="GO:0044183">
    <property type="term" value="F:protein folding chaperone"/>
    <property type="evidence" value="ECO:0007669"/>
    <property type="project" value="InterPro"/>
</dbReference>
<dbReference type="GO" id="GO:0009788">
    <property type="term" value="P:negative regulation of abscisic acid-activated signaling pathway"/>
    <property type="evidence" value="ECO:0000315"/>
    <property type="project" value="UniProtKB"/>
</dbReference>
<dbReference type="GO" id="GO:1901671">
    <property type="term" value="P:positive regulation of superoxide dismutase activity"/>
    <property type="evidence" value="ECO:0000314"/>
    <property type="project" value="TAIR"/>
</dbReference>
<dbReference type="GO" id="GO:0051290">
    <property type="term" value="P:protein heterotetramerization"/>
    <property type="evidence" value="ECO:0000353"/>
    <property type="project" value="UniProtKB"/>
</dbReference>
<dbReference type="GO" id="GO:0009409">
    <property type="term" value="P:response to cold"/>
    <property type="evidence" value="ECO:0000270"/>
    <property type="project" value="TAIR"/>
</dbReference>
<dbReference type="CDD" id="cd00320">
    <property type="entry name" value="cpn10"/>
    <property type="match status" value="2"/>
</dbReference>
<dbReference type="FunFam" id="2.30.33.40:FF:000001">
    <property type="entry name" value="10 kDa chaperonin"/>
    <property type="match status" value="1"/>
</dbReference>
<dbReference type="FunFam" id="2.30.33.40:FF:000005">
    <property type="entry name" value="20 kDa chaperonin, chloroplastic"/>
    <property type="match status" value="1"/>
</dbReference>
<dbReference type="Gene3D" id="2.30.33.40">
    <property type="entry name" value="GroES chaperonin"/>
    <property type="match status" value="2"/>
</dbReference>
<dbReference type="HAMAP" id="MF_00580">
    <property type="entry name" value="CH10"/>
    <property type="match status" value="2"/>
</dbReference>
<dbReference type="InterPro" id="IPR020818">
    <property type="entry name" value="Chaperonin_GroES"/>
</dbReference>
<dbReference type="InterPro" id="IPR037124">
    <property type="entry name" value="Chaperonin_GroES_sf"/>
</dbReference>
<dbReference type="InterPro" id="IPR018369">
    <property type="entry name" value="Chaprnonin_Cpn10_CS"/>
</dbReference>
<dbReference type="InterPro" id="IPR017416">
    <property type="entry name" value="Cpn20"/>
</dbReference>
<dbReference type="InterPro" id="IPR011032">
    <property type="entry name" value="GroES-like_sf"/>
</dbReference>
<dbReference type="NCBIfam" id="NF001531">
    <property type="entry name" value="PRK00364.2-2"/>
    <property type="match status" value="2"/>
</dbReference>
<dbReference type="PANTHER" id="PTHR10772">
    <property type="entry name" value="10 KDA HEAT SHOCK PROTEIN"/>
    <property type="match status" value="1"/>
</dbReference>
<dbReference type="PANTHER" id="PTHR10772:SF63">
    <property type="entry name" value="20 KDA CHAPERONIN, CHLOROPLASTIC"/>
    <property type="match status" value="1"/>
</dbReference>
<dbReference type="Pfam" id="PF00166">
    <property type="entry name" value="Cpn10"/>
    <property type="match status" value="2"/>
</dbReference>
<dbReference type="PIRSF" id="PIRSF038157">
    <property type="entry name" value="Chaperonin_21_chloroplast"/>
    <property type="match status" value="1"/>
</dbReference>
<dbReference type="PRINTS" id="PR00297">
    <property type="entry name" value="CHAPERONIN10"/>
</dbReference>
<dbReference type="SMART" id="SM00883">
    <property type="entry name" value="Cpn10"/>
    <property type="match status" value="2"/>
</dbReference>
<dbReference type="SUPFAM" id="SSF50129">
    <property type="entry name" value="GroES-like"/>
    <property type="match status" value="2"/>
</dbReference>
<dbReference type="PROSITE" id="PS00681">
    <property type="entry name" value="CHAPERONINS_CPN10"/>
    <property type="match status" value="2"/>
</dbReference>
<name>CH20_ARATH</name>
<evidence type="ECO:0000255" key="1"/>
<evidence type="ECO:0000269" key="2">
    <source>
    </source>
</evidence>
<evidence type="ECO:0000269" key="3">
    <source>
    </source>
</evidence>
<evidence type="ECO:0000269" key="4">
    <source>
    </source>
</evidence>
<evidence type="ECO:0000269" key="5">
    <source>
    </source>
</evidence>
<evidence type="ECO:0000269" key="6">
    <source>
    </source>
</evidence>
<evidence type="ECO:0000269" key="7">
    <source>
    </source>
</evidence>
<evidence type="ECO:0000305" key="8"/>
<evidence type="ECO:0007744" key="9">
    <source>
    </source>
</evidence>
<protein>
    <recommendedName>
        <fullName>20 kDa chaperonin, chloroplastic</fullName>
    </recommendedName>
    <alternativeName>
        <fullName>Chaperonin 10</fullName>
        <shortName>Ch-CPN10</shortName>
        <shortName>Cpn10</shortName>
    </alternativeName>
    <alternativeName>
        <fullName>Chaperonin 20</fullName>
    </alternativeName>
    <alternativeName>
        <fullName>Protein Cpn21</fullName>
    </alternativeName>
</protein>
<organism>
    <name type="scientific">Arabidopsis thaliana</name>
    <name type="common">Mouse-ear cress</name>
    <dbReference type="NCBI Taxonomy" id="3702"/>
    <lineage>
        <taxon>Eukaryota</taxon>
        <taxon>Viridiplantae</taxon>
        <taxon>Streptophyta</taxon>
        <taxon>Embryophyta</taxon>
        <taxon>Tracheophyta</taxon>
        <taxon>Spermatophyta</taxon>
        <taxon>Magnoliopsida</taxon>
        <taxon>eudicotyledons</taxon>
        <taxon>Gunneridae</taxon>
        <taxon>Pentapetalae</taxon>
        <taxon>rosids</taxon>
        <taxon>malvids</taxon>
        <taxon>Brassicales</taxon>
        <taxon>Brassicaceae</taxon>
        <taxon>Camelineae</taxon>
        <taxon>Arabidopsis</taxon>
    </lineage>
</organism>
<feature type="transit peptide" description="Chloroplast" evidence="1">
    <location>
        <begin position="1"/>
        <end position="50"/>
    </location>
</feature>
<feature type="chain" id="PRO_0000005045" description="20 kDa chaperonin, chloroplastic">
    <location>
        <begin position="51"/>
        <end position="253"/>
    </location>
</feature>
<feature type="region of interest" description="Cpn-10 domain 1" evidence="8">
    <location>
        <begin position="60"/>
        <end position="153"/>
    </location>
</feature>
<feature type="region of interest" description="Cpn-10 domain 2" evidence="8">
    <location>
        <begin position="159"/>
        <end position="252"/>
    </location>
</feature>
<feature type="modified residue" description="Phosphothreonine" evidence="9">
    <location>
        <position position="212"/>
    </location>
</feature>
<feature type="mutagenesis site" description="Reduces co-chaperone activity more than 20-fold." evidence="3">
    <original>G</original>
    <variation>A</variation>
    <location>
        <position position="83"/>
    </location>
</feature>
<feature type="mutagenesis site" description="Reduces co-chaperone activity more than 20-fold." evidence="3">
    <original>L</original>
    <variation>A</variation>
    <location>
        <position position="86"/>
    </location>
</feature>
<feature type="mutagenesis site" description="Reduces co-chaperone activity more than 3-fold." evidence="3">
    <original>G</original>
    <variation>A</variation>
    <location>
        <position position="181"/>
    </location>
</feature>
<feature type="mutagenesis site" description="Reduces co-chaperone activity more than 20-fold." evidence="3">
    <original>L</original>
    <variation>A</variation>
    <location>
        <position position="184"/>
    </location>
</feature>
<feature type="sequence conflict" description="In Ref. 3; AAC14026." evidence="8" ref="3">
    <original>F</original>
    <variation>V</variation>
    <location>
        <position position="31"/>
    </location>
</feature>
<feature type="sequence conflict" description="In Ref. 3; AAC14026." evidence="8" ref="3">
    <original>LP</original>
    <variation>TFH</variation>
    <location>
        <begin position="86"/>
        <end position="87"/>
    </location>
</feature>
<proteinExistence type="evidence at protein level"/>
<sequence length="253" mass="26802">MAATQLTASPVTMSARSLASLDGLRASSVKFSSLKPGTLRQSQFRRLVVKAASVVAPKYTSIKPLGDRVLVKIKEAEEKTLGGILLPSTAQSKPQGGEVVAVGEGRTIGKNKIDITVPTGAQIIYSKYAGTEVEFNDVKHLILKEDDIVGILETEDIKDLKPLNDRVFIKVAEAEEKTAGGLLLTETTKEKPSIGTVIAVGPGSLDEEGKITPLPVSTGSTVLYSKYAGNDFKGKDGSNYIALRASDVMAILS</sequence>
<keyword id="KW-0143">Chaperone</keyword>
<keyword id="KW-0150">Chloroplast</keyword>
<keyword id="KW-0597">Phosphoprotein</keyword>
<keyword id="KW-0934">Plastid</keyword>
<keyword id="KW-1185">Reference proteome</keyword>
<keyword id="KW-0677">Repeat</keyword>
<keyword id="KW-0346">Stress response</keyword>
<keyword id="KW-0809">Transit peptide</keyword>
<reference key="1">
    <citation type="journal article" date="1999" name="Biochim. Biophys. Acta">
        <title>cDNA sequence and overexpression of chloroplast chaperonin 21 from Arabidopsis thaliana.</title>
        <authorList>
            <person name="Hirohashi T."/>
            <person name="Nishio K."/>
            <person name="Nakai M."/>
        </authorList>
    </citation>
    <scope>NUCLEOTIDE SEQUENCE [MRNA]</scope>
    <source>
        <strain>cv. Columbia</strain>
    </source>
</reference>
<reference key="2">
    <citation type="journal article" date="2000" name="Biochem. Biophys. Res. Commun.">
        <title>Arabidopsis chloroplast chaperonin 10 is a calmodulin-binding protein.</title>
        <authorList>
            <person name="Yang T."/>
            <person name="Poovaiah B.W."/>
        </authorList>
    </citation>
    <scope>NUCLEOTIDE SEQUENCE [MRNA]</scope>
    <source>
        <tissue>Seedling</tissue>
    </source>
</reference>
<reference key="3">
    <citation type="submission" date="1998-04" db="EMBL/GenBank/DDBJ databases">
        <authorList>
            <person name="Yi H."/>
            <person name="Lee J."/>
            <person name="Shin B."/>
            <person name="Choi G."/>
        </authorList>
    </citation>
    <scope>NUCLEOTIDE SEQUENCE [MRNA]</scope>
    <source>
        <strain>cv. Columbia</strain>
    </source>
</reference>
<reference key="4">
    <citation type="journal article" date="1999" name="Plant J.">
        <title>Chloroplast Cpn20 forms a tetrameric structure in Arabidopsis thaliana.</title>
        <authorList>
            <person name="Koumoto Y."/>
            <person name="Shimada T."/>
            <person name="Kondo M."/>
            <person name="Takao T."/>
            <person name="Shimonishi Y."/>
            <person name="Hara-Nishimura I."/>
            <person name="Nishimura M."/>
        </authorList>
    </citation>
    <scope>NUCLEOTIDE SEQUENCE [MRNA]</scope>
    <scope>SUBUNIT</scope>
    <scope>SUBCELLULAR LOCATION</scope>
    <scope>TISSUE SPECIFICITY</scope>
    <scope>INDUCTION BY HEAT SHOCK</scope>
    <source>
        <strain>cv. Landsberg erecta</strain>
        <tissue>Seedling</tissue>
    </source>
</reference>
<reference key="5">
    <citation type="journal article" date="2000" name="Nature">
        <title>Sequence and analysis of chromosome 5 of the plant Arabidopsis thaliana.</title>
        <authorList>
            <person name="Tabata S."/>
            <person name="Kaneko T."/>
            <person name="Nakamura Y."/>
            <person name="Kotani H."/>
            <person name="Kato T."/>
            <person name="Asamizu E."/>
            <person name="Miyajima N."/>
            <person name="Sasamoto S."/>
            <person name="Kimura T."/>
            <person name="Hosouchi T."/>
            <person name="Kawashima K."/>
            <person name="Kohara M."/>
            <person name="Matsumoto M."/>
            <person name="Matsuno A."/>
            <person name="Muraki A."/>
            <person name="Nakayama S."/>
            <person name="Nakazaki N."/>
            <person name="Naruo K."/>
            <person name="Okumura S."/>
            <person name="Shinpo S."/>
            <person name="Takeuchi C."/>
            <person name="Wada T."/>
            <person name="Watanabe A."/>
            <person name="Yamada M."/>
            <person name="Yasuda M."/>
            <person name="Sato S."/>
            <person name="de la Bastide M."/>
            <person name="Huang E."/>
            <person name="Spiegel L."/>
            <person name="Gnoj L."/>
            <person name="O'Shaughnessy A."/>
            <person name="Preston R."/>
            <person name="Habermann K."/>
            <person name="Murray J."/>
            <person name="Johnson D."/>
            <person name="Rohlfing T."/>
            <person name="Nelson J."/>
            <person name="Stoneking T."/>
            <person name="Pepin K."/>
            <person name="Spieth J."/>
            <person name="Sekhon M."/>
            <person name="Armstrong J."/>
            <person name="Becker M."/>
            <person name="Belter E."/>
            <person name="Cordum H."/>
            <person name="Cordes M."/>
            <person name="Courtney L."/>
            <person name="Courtney W."/>
            <person name="Dante M."/>
            <person name="Du H."/>
            <person name="Edwards J."/>
            <person name="Fryman J."/>
            <person name="Haakensen B."/>
            <person name="Lamar E."/>
            <person name="Latreille P."/>
            <person name="Leonard S."/>
            <person name="Meyer R."/>
            <person name="Mulvaney E."/>
            <person name="Ozersky P."/>
            <person name="Riley A."/>
            <person name="Strowmatt C."/>
            <person name="Wagner-McPherson C."/>
            <person name="Wollam A."/>
            <person name="Yoakum M."/>
            <person name="Bell M."/>
            <person name="Dedhia N."/>
            <person name="Parnell L."/>
            <person name="Shah R."/>
            <person name="Rodriguez M."/>
            <person name="Hoon See L."/>
            <person name="Vil D."/>
            <person name="Baker J."/>
            <person name="Kirchoff K."/>
            <person name="Toth K."/>
            <person name="King L."/>
            <person name="Bahret A."/>
            <person name="Miller B."/>
            <person name="Marra M.A."/>
            <person name="Martienssen R."/>
            <person name="McCombie W.R."/>
            <person name="Wilson R.K."/>
            <person name="Murphy G."/>
            <person name="Bancroft I."/>
            <person name="Volckaert G."/>
            <person name="Wambutt R."/>
            <person name="Duesterhoeft A."/>
            <person name="Stiekema W."/>
            <person name="Pohl T."/>
            <person name="Entian K.-D."/>
            <person name="Terryn N."/>
            <person name="Hartley N."/>
            <person name="Bent E."/>
            <person name="Johnson S."/>
            <person name="Langham S.-A."/>
            <person name="McCullagh B."/>
            <person name="Robben J."/>
            <person name="Grymonprez B."/>
            <person name="Zimmermann W."/>
            <person name="Ramsperger U."/>
            <person name="Wedler H."/>
            <person name="Balke K."/>
            <person name="Wedler E."/>
            <person name="Peters S."/>
            <person name="van Staveren M."/>
            <person name="Dirkse W."/>
            <person name="Mooijman P."/>
            <person name="Klein Lankhorst R."/>
            <person name="Weitzenegger T."/>
            <person name="Bothe G."/>
            <person name="Rose M."/>
            <person name="Hauf J."/>
            <person name="Berneiser S."/>
            <person name="Hempel S."/>
            <person name="Feldpausch M."/>
            <person name="Lamberth S."/>
            <person name="Villarroel R."/>
            <person name="Gielen J."/>
            <person name="Ardiles W."/>
            <person name="Bents O."/>
            <person name="Lemcke K."/>
            <person name="Kolesov G."/>
            <person name="Mayer K.F.X."/>
            <person name="Rudd S."/>
            <person name="Schoof H."/>
            <person name="Schueller C."/>
            <person name="Zaccaria P."/>
            <person name="Mewes H.-W."/>
            <person name="Bevan M."/>
            <person name="Fransz P.F."/>
        </authorList>
    </citation>
    <scope>NUCLEOTIDE SEQUENCE [LARGE SCALE GENOMIC DNA]</scope>
    <source>
        <strain>cv. Columbia</strain>
    </source>
</reference>
<reference key="6">
    <citation type="journal article" date="2017" name="Plant J.">
        <title>Araport11: a complete reannotation of the Arabidopsis thaliana reference genome.</title>
        <authorList>
            <person name="Cheng C.Y."/>
            <person name="Krishnakumar V."/>
            <person name="Chan A.P."/>
            <person name="Thibaud-Nissen F."/>
            <person name="Schobel S."/>
            <person name="Town C.D."/>
        </authorList>
    </citation>
    <scope>GENOME REANNOTATION</scope>
    <source>
        <strain>cv. Columbia</strain>
    </source>
</reference>
<reference key="7">
    <citation type="journal article" date="2003" name="Science">
        <title>Empirical analysis of transcriptional activity in the Arabidopsis genome.</title>
        <authorList>
            <person name="Yamada K."/>
            <person name="Lim J."/>
            <person name="Dale J.M."/>
            <person name="Chen H."/>
            <person name="Shinn P."/>
            <person name="Palm C.J."/>
            <person name="Southwick A.M."/>
            <person name="Wu H.C."/>
            <person name="Kim C.J."/>
            <person name="Nguyen M."/>
            <person name="Pham P.K."/>
            <person name="Cheuk R.F."/>
            <person name="Karlin-Newmann G."/>
            <person name="Liu S.X."/>
            <person name="Lam B."/>
            <person name="Sakano H."/>
            <person name="Wu T."/>
            <person name="Yu G."/>
            <person name="Miranda M."/>
            <person name="Quach H.L."/>
            <person name="Tripp M."/>
            <person name="Chang C.H."/>
            <person name="Lee J.M."/>
            <person name="Toriumi M.J."/>
            <person name="Chan M.M."/>
            <person name="Tang C.C."/>
            <person name="Onodera C.S."/>
            <person name="Deng J.M."/>
            <person name="Akiyama K."/>
            <person name="Ansari Y."/>
            <person name="Arakawa T."/>
            <person name="Banh J."/>
            <person name="Banno F."/>
            <person name="Bowser L."/>
            <person name="Brooks S.Y."/>
            <person name="Carninci P."/>
            <person name="Chao Q."/>
            <person name="Choy N."/>
            <person name="Enju A."/>
            <person name="Goldsmith A.D."/>
            <person name="Gurjal M."/>
            <person name="Hansen N.F."/>
            <person name="Hayashizaki Y."/>
            <person name="Johnson-Hopson C."/>
            <person name="Hsuan V.W."/>
            <person name="Iida K."/>
            <person name="Karnes M."/>
            <person name="Khan S."/>
            <person name="Koesema E."/>
            <person name="Ishida J."/>
            <person name="Jiang P.X."/>
            <person name="Jones T."/>
            <person name="Kawai J."/>
            <person name="Kamiya A."/>
            <person name="Meyers C."/>
            <person name="Nakajima M."/>
            <person name="Narusaka M."/>
            <person name="Seki M."/>
            <person name="Sakurai T."/>
            <person name="Satou M."/>
            <person name="Tamse R."/>
            <person name="Vaysberg M."/>
            <person name="Wallender E.K."/>
            <person name="Wong C."/>
            <person name="Yamamura Y."/>
            <person name="Yuan S."/>
            <person name="Shinozaki K."/>
            <person name="Davis R.W."/>
            <person name="Theologis A."/>
            <person name="Ecker J.R."/>
        </authorList>
    </citation>
    <scope>NUCLEOTIDE SEQUENCE [LARGE SCALE MRNA]</scope>
    <source>
        <strain>cv. Columbia</strain>
    </source>
</reference>
<reference key="8">
    <citation type="journal article" date="2007" name="J. Biol. Chem.">
        <title>Significance of the N-terminal domain for the function of chloroplast cpn20 chaperonin.</title>
        <authorList>
            <person name="Bonshtien A.L."/>
            <person name="Weiss C."/>
            <person name="Vitlin A."/>
            <person name="Niv A."/>
            <person name="Lorimer G.H."/>
            <person name="Azem A."/>
        </authorList>
    </citation>
    <scope>FUNCTION</scope>
    <scope>MUTAGENESIS OF GLY-83; LEU-86; GLY-181 AND LEU-184</scope>
</reference>
<reference key="9">
    <citation type="journal article" date="2012" name="J. Proteome Res.">
        <title>Identification of phosphoproteins in Arabidopsis thaliana leaves using polyethylene glycol fractionation, immobilized metal-ion affinity chromatography, two-dimensional gel electrophoresis and mass spectrometry.</title>
        <authorList>
            <person name="Aryal U.K."/>
            <person name="Krochko J.E."/>
            <person name="Ross A.R."/>
        </authorList>
    </citation>
    <scope>PHOSPHORYLATION [LARGE SCALE ANALYSIS] AT THR-212</scope>
    <scope>IDENTIFICATION BY MASS SPECTROMETRY [LARGE SCALE ANALYSIS]</scope>
</reference>
<reference key="10">
    <citation type="journal article" date="2013" name="New Phytol.">
        <title>CHAPERONIN 20 mediates iron superoxide dismutase (FeSOD) activity independent of its co-chaperonin role in Arabidopsis chloroplasts.</title>
        <authorList>
            <person name="Kuo W.Y."/>
            <person name="Huang C.H."/>
            <person name="Liu A.C."/>
            <person name="Cheng C.P."/>
            <person name="Li S.H."/>
            <person name="Chang W.C."/>
            <person name="Weiss C."/>
            <person name="Azem A."/>
            <person name="Jinn T.L."/>
        </authorList>
    </citation>
    <scope>INTERACTION WITH FSD1</scope>
    <scope>FUNCTION</scope>
</reference>
<reference key="11">
    <citation type="journal article" date="2013" name="Plant Mol. Biol.">
        <title>Cochaperonin CPN20 negatively regulates abscisic acid signaling in Arabidopsis.</title>
        <authorList>
            <person name="Zhang X.F."/>
            <person name="Jiang T."/>
            <person name="Wu Z."/>
            <person name="Du S.Y."/>
            <person name="Yu Y.T."/>
            <person name="Jiang S.C."/>
            <person name="Lu K."/>
            <person name="Feng X.J."/>
            <person name="Wang X.F."/>
            <person name="Zhang D.P."/>
        </authorList>
    </citation>
    <scope>FUNCTION</scope>
    <scope>INTERACTION WITH CHLH</scope>
</reference>
<reference key="12">
    <citation type="journal article" date="2015" name="Plant Cell">
        <title>Structures, functions, and interactions of ClpT1 and ClpT2 in the Clp protease system of Arabidopsis chloroplasts.</title>
        <authorList>
            <person name="Kim J."/>
            <person name="Kimber M.S."/>
            <person name="Nishimura K."/>
            <person name="Friso G."/>
            <person name="Schultz L."/>
            <person name="Ponnala L."/>
            <person name="van Wijk K.J."/>
        </authorList>
    </citation>
    <scope>INTERACTION WITH CLPT1 AND CLPT2</scope>
</reference>
<reference key="13">
    <citation type="journal article" date="2021" name="Front. Plant Sci.">
        <title>O-fucosylation of CPN20 by SPINDLY derepresses abscisic acid signaling during seed germination and seedling development.</title>
        <authorList>
            <person name="Liang L."/>
            <person name="Wang Q."/>
            <person name="Song Z."/>
            <person name="Wu Y."/>
            <person name="Liang Q."/>
            <person name="Wang Q."/>
            <person name="Yang J."/>
            <person name="Bi Y."/>
            <person name="Zhou W."/>
            <person name="Fan L.M."/>
        </authorList>
    </citation>
    <scope>INTERACTION WITH SPY</scope>
</reference>
<accession>O65282</accession>
<accession>Q9TNN2</accession>